<proteinExistence type="inferred from homology"/>
<evidence type="ECO:0000255" key="1">
    <source>
        <dbReference type="HAMAP-Rule" id="MF_00001"/>
    </source>
</evidence>
<reference key="1">
    <citation type="journal article" date="2007" name="Genome Res.">
        <title>Genome characteristics of facultatively symbiotic Frankia sp. strains reflect host range and host plant biogeography.</title>
        <authorList>
            <person name="Normand P."/>
            <person name="Lapierre P."/>
            <person name="Tisa L.S."/>
            <person name="Gogarten J.P."/>
            <person name="Alloisio N."/>
            <person name="Bagnarol E."/>
            <person name="Bassi C.A."/>
            <person name="Berry A.M."/>
            <person name="Bickhart D.M."/>
            <person name="Choisne N."/>
            <person name="Couloux A."/>
            <person name="Cournoyer B."/>
            <person name="Cruveiller S."/>
            <person name="Daubin V."/>
            <person name="Demange N."/>
            <person name="Francino M.P."/>
            <person name="Goltsman E."/>
            <person name="Huang Y."/>
            <person name="Kopp O.R."/>
            <person name="Labarre L."/>
            <person name="Lapidus A."/>
            <person name="Lavire C."/>
            <person name="Marechal J."/>
            <person name="Martinez M."/>
            <person name="Mastronunzio J.E."/>
            <person name="Mullin B.C."/>
            <person name="Niemann J."/>
            <person name="Pujic P."/>
            <person name="Rawnsley T."/>
            <person name="Rouy Z."/>
            <person name="Schenowitz C."/>
            <person name="Sellstedt A."/>
            <person name="Tavares F."/>
            <person name="Tomkins J.P."/>
            <person name="Vallenet D."/>
            <person name="Valverde C."/>
            <person name="Wall L.G."/>
            <person name="Wang Y."/>
            <person name="Medigue C."/>
            <person name="Benson D.R."/>
        </authorList>
    </citation>
    <scope>NUCLEOTIDE SEQUENCE [LARGE SCALE GENOMIC DNA]</scope>
    <source>
        <strain>DSM 45818 / CECT 9043 / HFP020203 / CcI3</strain>
    </source>
</reference>
<organism>
    <name type="scientific">Frankia casuarinae (strain DSM 45818 / CECT 9043 / HFP020203 / CcI3)</name>
    <dbReference type="NCBI Taxonomy" id="106370"/>
    <lineage>
        <taxon>Bacteria</taxon>
        <taxon>Bacillati</taxon>
        <taxon>Actinomycetota</taxon>
        <taxon>Actinomycetes</taxon>
        <taxon>Frankiales</taxon>
        <taxon>Frankiaceae</taxon>
        <taxon>Frankia</taxon>
    </lineage>
</organism>
<gene>
    <name evidence="1" type="primary">pyrB</name>
    <name type="ordered locus">Francci3_3202</name>
</gene>
<accession>Q2J833</accession>
<feature type="chain" id="PRO_0000321103" description="Aspartate carbamoyltransferase catalytic subunit">
    <location>
        <begin position="1"/>
        <end position="318"/>
    </location>
</feature>
<feature type="binding site" evidence="1">
    <location>
        <position position="66"/>
    </location>
    <ligand>
        <name>carbamoyl phosphate</name>
        <dbReference type="ChEBI" id="CHEBI:58228"/>
    </ligand>
</feature>
<feature type="binding site" evidence="1">
    <location>
        <position position="67"/>
    </location>
    <ligand>
        <name>carbamoyl phosphate</name>
        <dbReference type="ChEBI" id="CHEBI:58228"/>
    </ligand>
</feature>
<feature type="binding site" evidence="1">
    <location>
        <position position="94"/>
    </location>
    <ligand>
        <name>L-aspartate</name>
        <dbReference type="ChEBI" id="CHEBI:29991"/>
    </ligand>
</feature>
<feature type="binding site" evidence="1">
    <location>
        <position position="116"/>
    </location>
    <ligand>
        <name>carbamoyl phosphate</name>
        <dbReference type="ChEBI" id="CHEBI:58228"/>
    </ligand>
</feature>
<feature type="binding site" evidence="1">
    <location>
        <position position="144"/>
    </location>
    <ligand>
        <name>carbamoyl phosphate</name>
        <dbReference type="ChEBI" id="CHEBI:58228"/>
    </ligand>
</feature>
<feature type="binding site" evidence="1">
    <location>
        <position position="147"/>
    </location>
    <ligand>
        <name>carbamoyl phosphate</name>
        <dbReference type="ChEBI" id="CHEBI:58228"/>
    </ligand>
</feature>
<feature type="binding site" evidence="1">
    <location>
        <position position="177"/>
    </location>
    <ligand>
        <name>L-aspartate</name>
        <dbReference type="ChEBI" id="CHEBI:29991"/>
    </ligand>
</feature>
<feature type="binding site" evidence="1">
    <location>
        <position position="231"/>
    </location>
    <ligand>
        <name>L-aspartate</name>
        <dbReference type="ChEBI" id="CHEBI:29991"/>
    </ligand>
</feature>
<feature type="binding site" evidence="1">
    <location>
        <position position="272"/>
    </location>
    <ligand>
        <name>carbamoyl phosphate</name>
        <dbReference type="ChEBI" id="CHEBI:58228"/>
    </ligand>
</feature>
<feature type="binding site" evidence="1">
    <location>
        <position position="273"/>
    </location>
    <ligand>
        <name>carbamoyl phosphate</name>
        <dbReference type="ChEBI" id="CHEBI:58228"/>
    </ligand>
</feature>
<protein>
    <recommendedName>
        <fullName evidence="1">Aspartate carbamoyltransferase catalytic subunit</fullName>
        <ecNumber evidence="1">2.1.3.2</ecNumber>
    </recommendedName>
    <alternativeName>
        <fullName evidence="1">Aspartate transcarbamylase</fullName>
        <shortName evidence="1">ATCase</shortName>
    </alternativeName>
</protein>
<dbReference type="EC" id="2.1.3.2" evidence="1"/>
<dbReference type="EMBL" id="CP000249">
    <property type="protein sequence ID" value="ABD12559.1"/>
    <property type="molecule type" value="Genomic_DNA"/>
</dbReference>
<dbReference type="SMR" id="Q2J833"/>
<dbReference type="STRING" id="106370.Francci3_3202"/>
<dbReference type="KEGG" id="fra:Francci3_3202"/>
<dbReference type="eggNOG" id="COG0540">
    <property type="taxonomic scope" value="Bacteria"/>
</dbReference>
<dbReference type="HOGENOM" id="CLU_043846_2_0_11"/>
<dbReference type="PhylomeDB" id="Q2J833"/>
<dbReference type="UniPathway" id="UPA00070">
    <property type="reaction ID" value="UER00116"/>
</dbReference>
<dbReference type="Proteomes" id="UP000001937">
    <property type="component" value="Chromosome"/>
</dbReference>
<dbReference type="GO" id="GO:0005829">
    <property type="term" value="C:cytosol"/>
    <property type="evidence" value="ECO:0007669"/>
    <property type="project" value="TreeGrafter"/>
</dbReference>
<dbReference type="GO" id="GO:0016597">
    <property type="term" value="F:amino acid binding"/>
    <property type="evidence" value="ECO:0007669"/>
    <property type="project" value="InterPro"/>
</dbReference>
<dbReference type="GO" id="GO:0004070">
    <property type="term" value="F:aspartate carbamoyltransferase activity"/>
    <property type="evidence" value="ECO:0007669"/>
    <property type="project" value="UniProtKB-UniRule"/>
</dbReference>
<dbReference type="GO" id="GO:0006207">
    <property type="term" value="P:'de novo' pyrimidine nucleobase biosynthetic process"/>
    <property type="evidence" value="ECO:0007669"/>
    <property type="project" value="InterPro"/>
</dbReference>
<dbReference type="GO" id="GO:0044205">
    <property type="term" value="P:'de novo' UMP biosynthetic process"/>
    <property type="evidence" value="ECO:0007669"/>
    <property type="project" value="UniProtKB-UniRule"/>
</dbReference>
<dbReference type="GO" id="GO:0006520">
    <property type="term" value="P:amino acid metabolic process"/>
    <property type="evidence" value="ECO:0007669"/>
    <property type="project" value="InterPro"/>
</dbReference>
<dbReference type="FunFam" id="3.40.50.1370:FF:000007">
    <property type="entry name" value="Aspartate carbamoyltransferase"/>
    <property type="match status" value="1"/>
</dbReference>
<dbReference type="FunFam" id="3.40.50.1370:FF:000012">
    <property type="entry name" value="Aspartate carbamoyltransferase"/>
    <property type="match status" value="1"/>
</dbReference>
<dbReference type="Gene3D" id="3.40.50.1370">
    <property type="entry name" value="Aspartate/ornithine carbamoyltransferase"/>
    <property type="match status" value="2"/>
</dbReference>
<dbReference type="HAMAP" id="MF_00001">
    <property type="entry name" value="Asp_carb_tr"/>
    <property type="match status" value="1"/>
</dbReference>
<dbReference type="InterPro" id="IPR006132">
    <property type="entry name" value="Asp/Orn_carbamoyltranf_P-bd"/>
</dbReference>
<dbReference type="InterPro" id="IPR006130">
    <property type="entry name" value="Asp/Orn_carbamoylTrfase"/>
</dbReference>
<dbReference type="InterPro" id="IPR036901">
    <property type="entry name" value="Asp/Orn_carbamoylTrfase_sf"/>
</dbReference>
<dbReference type="InterPro" id="IPR002082">
    <property type="entry name" value="Asp_carbamoyltransf"/>
</dbReference>
<dbReference type="InterPro" id="IPR006131">
    <property type="entry name" value="Asp_carbamoyltransf_Asp/Orn-bd"/>
</dbReference>
<dbReference type="NCBIfam" id="TIGR00670">
    <property type="entry name" value="asp_carb_tr"/>
    <property type="match status" value="1"/>
</dbReference>
<dbReference type="NCBIfam" id="NF002032">
    <property type="entry name" value="PRK00856.1"/>
    <property type="match status" value="1"/>
</dbReference>
<dbReference type="PANTHER" id="PTHR45753:SF6">
    <property type="entry name" value="ASPARTATE CARBAMOYLTRANSFERASE"/>
    <property type="match status" value="1"/>
</dbReference>
<dbReference type="PANTHER" id="PTHR45753">
    <property type="entry name" value="ORNITHINE CARBAMOYLTRANSFERASE, MITOCHONDRIAL"/>
    <property type="match status" value="1"/>
</dbReference>
<dbReference type="Pfam" id="PF00185">
    <property type="entry name" value="OTCace"/>
    <property type="match status" value="1"/>
</dbReference>
<dbReference type="Pfam" id="PF02729">
    <property type="entry name" value="OTCace_N"/>
    <property type="match status" value="1"/>
</dbReference>
<dbReference type="PRINTS" id="PR00100">
    <property type="entry name" value="AOTCASE"/>
</dbReference>
<dbReference type="PRINTS" id="PR00101">
    <property type="entry name" value="ATCASE"/>
</dbReference>
<dbReference type="SUPFAM" id="SSF53671">
    <property type="entry name" value="Aspartate/ornithine carbamoyltransferase"/>
    <property type="match status" value="1"/>
</dbReference>
<dbReference type="PROSITE" id="PS00097">
    <property type="entry name" value="CARBAMOYLTRANSFERASE"/>
    <property type="match status" value="1"/>
</dbReference>
<name>PYRB_FRACC</name>
<sequence length="318" mass="34343">MGSTSRVRGTGVNRHLLSTEDLDRDDALLVLDTAERMARVAEASVRKLPTLRGRTVVNLFFEDSTRTRTSFEVAAKRLSADVINFSARGSSVSKGESLKDTAQTLEAMGADAVVCRHAASGAPHRLASWVRGSVVNAGDGTHEHPTQALLDAFTMRRRLGRIDGLAVTIVGDVLHSRVARSNVWLLATLGATVTVVAPPTLVPLGISSWPVEVSYNLDAVLPKSDVVMMLRVQRERMSAAFFPTEREYSRRYGLDADRAEMLPDHALVMHPGPMVRGMEIASRVADSARSTVVEQVANGVSVRMAVLYLLLGGSGEVS</sequence>
<keyword id="KW-0665">Pyrimidine biosynthesis</keyword>
<keyword id="KW-1185">Reference proteome</keyword>
<keyword id="KW-0808">Transferase</keyword>
<comment type="function">
    <text evidence="1">Catalyzes the condensation of carbamoyl phosphate and aspartate to form carbamoyl aspartate and inorganic phosphate, the committed step in the de novo pyrimidine nucleotide biosynthesis pathway.</text>
</comment>
<comment type="catalytic activity">
    <reaction evidence="1">
        <text>carbamoyl phosphate + L-aspartate = N-carbamoyl-L-aspartate + phosphate + H(+)</text>
        <dbReference type="Rhea" id="RHEA:20013"/>
        <dbReference type="ChEBI" id="CHEBI:15378"/>
        <dbReference type="ChEBI" id="CHEBI:29991"/>
        <dbReference type="ChEBI" id="CHEBI:32814"/>
        <dbReference type="ChEBI" id="CHEBI:43474"/>
        <dbReference type="ChEBI" id="CHEBI:58228"/>
        <dbReference type="EC" id="2.1.3.2"/>
    </reaction>
</comment>
<comment type="pathway">
    <text evidence="1">Pyrimidine metabolism; UMP biosynthesis via de novo pathway; (S)-dihydroorotate from bicarbonate: step 2/3.</text>
</comment>
<comment type="subunit">
    <text evidence="1">Heterododecamer (2C3:3R2) of six catalytic PyrB chains organized as two trimers (C3), and six regulatory PyrI chains organized as three dimers (R2).</text>
</comment>
<comment type="similarity">
    <text evidence="1">Belongs to the aspartate/ornithine carbamoyltransferase superfamily. ATCase family.</text>
</comment>